<evidence type="ECO:0000255" key="1"/>
<evidence type="ECO:0000269" key="2">
    <source>
    </source>
</evidence>
<evidence type="ECO:0000269" key="3">
    <source>
    </source>
</evidence>
<evidence type="ECO:0000269" key="4">
    <source>
    </source>
</evidence>
<evidence type="ECO:0000303" key="5">
    <source>
    </source>
</evidence>
<evidence type="ECO:0000303" key="6">
    <source>
    </source>
</evidence>
<evidence type="ECO:0000303" key="7">
    <source>
    </source>
</evidence>
<evidence type="ECO:0000305" key="8"/>
<evidence type="ECO:0000305" key="9">
    <source>
    </source>
</evidence>
<evidence type="ECO:0000305" key="10">
    <source>
    </source>
</evidence>
<evidence type="ECO:0000312" key="11">
    <source>
        <dbReference type="EMBL" id="ABC73706.1"/>
    </source>
</evidence>
<dbReference type="EMBL" id="DQ354124">
    <property type="protein sequence ID" value="ABC73706.1"/>
    <property type="molecule type" value="mRNA"/>
</dbReference>
<dbReference type="RefSeq" id="XP_027199621.1">
    <property type="nucleotide sequence ID" value="XM_027343820.1"/>
</dbReference>
<dbReference type="SMR" id="Q2L7C5"/>
<dbReference type="Allergome" id="2863">
    <property type="allergen name" value="Der p 21"/>
</dbReference>
<dbReference type="Allergome" id="3262">
    <property type="allergen name" value="Der p 21.0101"/>
</dbReference>
<dbReference type="EnsemblMetazoa" id="XM_027343820.1">
    <property type="protein sequence ID" value="XP_027199621.1"/>
    <property type="gene ID" value="LOC113793749"/>
</dbReference>
<dbReference type="GeneID" id="113793749"/>
<dbReference type="InParanoid" id="Q2L7C5"/>
<dbReference type="OrthoDB" id="6501925at2759"/>
<dbReference type="Proteomes" id="UP000515146">
    <property type="component" value="Unplaced"/>
</dbReference>
<dbReference type="GO" id="GO:0005737">
    <property type="term" value="C:cytoplasm"/>
    <property type="evidence" value="ECO:0000314"/>
    <property type="project" value="UniProtKB"/>
</dbReference>
<dbReference type="GO" id="GO:0005783">
    <property type="term" value="C:endoplasmic reticulum"/>
    <property type="evidence" value="ECO:0000314"/>
    <property type="project" value="UniProtKB"/>
</dbReference>
<dbReference type="GO" id="GO:0005576">
    <property type="term" value="C:extracellular region"/>
    <property type="evidence" value="ECO:0000314"/>
    <property type="project" value="UniProtKB"/>
</dbReference>
<dbReference type="GO" id="GO:0031982">
    <property type="term" value="C:vesicle"/>
    <property type="evidence" value="ECO:0000314"/>
    <property type="project" value="UniProtKB"/>
</dbReference>
<dbReference type="GO" id="GO:0042803">
    <property type="term" value="F:protein homodimerization activity"/>
    <property type="evidence" value="ECO:0000314"/>
    <property type="project" value="UniProtKB"/>
</dbReference>
<dbReference type="Gene3D" id="1.20.58.970">
    <property type="match status" value="1"/>
</dbReference>
<dbReference type="InterPro" id="IPR020306">
    <property type="entry name" value="Mite_allergen_group-5/21"/>
</dbReference>
<dbReference type="InterPro" id="IPR038455">
    <property type="entry name" value="Mite_allergen_group-5/21_sf"/>
</dbReference>
<dbReference type="Pfam" id="PF11642">
    <property type="entry name" value="Blo-t-5"/>
    <property type="match status" value="1"/>
</dbReference>
<name>ALL21_DERPT</name>
<protein>
    <recommendedName>
        <fullName evidence="8">Mite allergen Der p 21.0101</fullName>
    </recommendedName>
    <alternativeName>
        <fullName evidence="5 6 7">Allergen Der p 21</fullName>
    </alternativeName>
    <allergenName evidence="8">Der p 21.0101</allergenName>
</protein>
<proteinExistence type="evidence at protein level"/>
<reference evidence="11" key="1">
    <citation type="journal article" date="2008" name="Allergy">
        <title>Characterization of Der p 21, a new important allergen derived from the gut of house dust mites.</title>
        <authorList>
            <person name="Weghofer M."/>
            <person name="Dall'Antonia Y."/>
            <person name="Grote M."/>
            <person name="Stocklinger A."/>
            <person name="Kneidinger M."/>
            <person name="Balic N."/>
            <person name="Krauth M.T."/>
            <person name="Fernandez-Caldas E."/>
            <person name="Thomas W.R."/>
            <person name="van Hage M."/>
            <person name="Vieths S."/>
            <person name="Spitzauer S."/>
            <person name="Horak F."/>
            <person name="Svergun D.I."/>
            <person name="Konarev P.V."/>
            <person name="Valent P."/>
            <person name="Thalhamer J."/>
            <person name="Keller W."/>
            <person name="Valenta R."/>
            <person name="Vrtala S."/>
        </authorList>
    </citation>
    <scope>NUCLEOTIDE SEQUENCE [MRNA]</scope>
    <scope>BIOPHYSICOCHEMICAL PROPERTIES</scope>
    <scope>SUBUNIT</scope>
    <scope>SUBCELLULAR LOCATION</scope>
    <scope>TISSUE SPECIFICITY</scope>
    <scope>ALLERGEN</scope>
    <scope>CIRCULAR DICHROISM ANALYSIS</scope>
</reference>
<reference key="2">
    <citation type="journal article" date="2014" name="Protein Expr. Purif.">
        <title>Characterization of the house dust mite allergen Der p 21 produced in Pichia pastoris.</title>
        <authorList>
            <person name="Pulsawat P."/>
            <person name="Theeraapisakkun M."/>
            <person name="Nony E."/>
            <person name="Le Mignon M."/>
            <person name="Jain K."/>
            <person name="Buaklin A."/>
            <person name="Wongpiyabovorn J."/>
            <person name="Ruxrungtham K."/>
            <person name="Jacquet A."/>
        </authorList>
    </citation>
    <scope>SUBUNIT</scope>
    <scope>ALLERGEN</scope>
    <scope>BIOTECHNOLOGY</scope>
    <scope>CIRCULAR DICHROISM ANALYSIS</scope>
</reference>
<reference key="3">
    <citation type="journal article" date="2018" name="Allergy">
        <title>Similar localization of conformational IgE epitopes on the house dust mite allergens Der p 5 and Der p 21 despite limited IgE cross-reactivity.</title>
        <authorList>
            <person name="Curin M."/>
            <person name="Garmatiuk T."/>
            <person name="Resch-Marat Y."/>
            <person name="Chen K.W."/>
            <person name="Hofer G."/>
            <person name="Fauland K."/>
            <person name="Keller W."/>
            <person name="Hemmer W."/>
            <person name="Vrtala S."/>
            <person name="Focke-Tejkl M."/>
            <person name="Valenta R."/>
        </authorList>
    </citation>
    <scope>ALLERGEN</scope>
    <scope>BIOTECHNOLOGY</scope>
    <scope>REGIONS</scope>
    <scope>3D-STRUCTURE MODELING</scope>
</reference>
<organism evidence="11">
    <name type="scientific">Dermatophagoides pteronyssinus</name>
    <name type="common">European house dust mite</name>
    <dbReference type="NCBI Taxonomy" id="6956"/>
    <lineage>
        <taxon>Eukaryota</taxon>
        <taxon>Metazoa</taxon>
        <taxon>Ecdysozoa</taxon>
        <taxon>Arthropoda</taxon>
        <taxon>Chelicerata</taxon>
        <taxon>Arachnida</taxon>
        <taxon>Acari</taxon>
        <taxon>Acariformes</taxon>
        <taxon>Sarcoptiformes</taxon>
        <taxon>Astigmata</taxon>
        <taxon>Psoroptidia</taxon>
        <taxon>Analgoidea</taxon>
        <taxon>Pyroglyphidae</taxon>
        <taxon>Dermatophagoidinae</taxon>
        <taxon>Dermatophagoides</taxon>
    </lineage>
</organism>
<accession>Q2L7C5</accession>
<keyword id="KW-0020">Allergen</keyword>
<keyword id="KW-0963">Cytoplasm</keyword>
<keyword id="KW-0256">Endoplasmic reticulum</keyword>
<keyword id="KW-1185">Reference proteome</keyword>
<keyword id="KW-0964">Secreted</keyword>
<keyword id="KW-0732">Signal</keyword>
<comment type="biophysicochemical properties">
    <temperatureDependence>
        <text evidence="2">Thermostable. Upon heating, unfolds only partially even at 95 degrees Celsius. Upon cooling to room temperature, almost completely restores its structure, indicating high heat stability and refolding capacity.</text>
    </temperatureDependence>
</comment>
<comment type="subunit">
    <text evidence="2 3">Monomer (PubMed:24874917). Homodimer (PubMed:18445190).</text>
</comment>
<comment type="subcellular location">
    <subcellularLocation>
        <location evidence="2">Cytoplasm</location>
    </subcellularLocation>
    <subcellularLocation>
        <location evidence="2">Endoplasmic reticulum</location>
    </subcellularLocation>
    <subcellularLocation>
        <location evidence="2">Vesicle</location>
    </subcellularLocation>
    <subcellularLocation>
        <location evidence="2">Secreted</location>
    </subcellularLocation>
    <text evidence="2">Associated with cytoplasmic matrix, detached cytoplasmic material and with electron-dense droplets, which presumably represent transport vesicles.</text>
</comment>
<comment type="tissue specificity">
    <text evidence="2">Expressed in the epithelium, lumen and microvilli of the midgut, and in feces.</text>
</comment>
<comment type="allergen">
    <text evidence="2 3 4">Causes an allergic reaction in human. Recombinant protein binds to IgE in patients allergic to house dust mite (HDM) (PubMed:18445190, PubMed:24874917, PubMed:29319884). Recombinant protein binds to IgE in 26% of the 117 patients tested living in urban area in Austria allergic to European HDM (PubMed:18445190). Recombinant protein binds to IgE in 25% of the 96 patients tested living in Bangkok allergic to European HDM (PubMed:24874917). No relevant cross-reactivity with Der p 5 allergen (PubMed:18445190, PubMed:29319884). No relevant cross-reactivity with Blot t 5 or Lep d 5 allergens. Causes histamine release from human peripheral blood mononuclear leukocytes. Up-regulates expression of CD203c activation marker on basophils. Induces degranulation of humanized rat basophil leukemia (RBL) cells and the release of beta-hexosaminidase from them (PubMed:18445190). Triggers interleukin-8 production in human airway epithelial cells through Toll-like receptor 2 (TLR2)-dependent signaling (PubMed:24874917).</text>
</comment>
<comment type="biotechnology">
    <text evidence="9 10">The Pichia pastoris-produced protein seems to be well suited for in vitro immune cell activation assays and for in vivo applications such as immunotherapy and skin-prick testing, because it is properly folded, free of endotoxins and has the appropriate allergenic characteristics (PubMed:24874917). Non-allergenic peptides identified from the mapped major conformational IgE epitope-containing areas could be used for the engineering of house dust mite allergy vaccine (PubMed:29319884).</text>
</comment>
<comment type="similarity">
    <text evidence="8">Belongs to the mite group 5 allergen family.</text>
</comment>
<sequence>MKFIITLFAAIVMAAAVSGFIVGDKKEDEWRMAFDRLMMEELETKIDQVEKGLLHLSEQYKELEKTKSKELKEQILRELTIGENFMKGALKFFEMEAKRTDLNMFERYNYEFALESIKLLIKKLDELAKKVKAVNPDEYY</sequence>
<feature type="signal peptide" evidence="1">
    <location>
        <begin position="1"/>
        <end position="19"/>
    </location>
</feature>
<feature type="chain" id="PRO_5004212025" description="Mite allergen Der p 21.0101" evidence="1">
    <location>
        <begin position="20"/>
        <end position="140"/>
    </location>
</feature>
<feature type="region of interest" description="Immunodominant conformational IgE-binding epitope" evidence="4">
    <location>
        <begin position="20"/>
        <end position="53"/>
    </location>
</feature>
<feature type="region of interest" description="Immunodominant conformational IgE-binding epitope" evidence="4">
    <location>
        <begin position="108"/>
        <end position="140"/>
    </location>
</feature>